<protein>
    <recommendedName>
        <fullName evidence="1">3-isopropylmalate dehydratase large subunit</fullName>
        <ecNumber evidence="1">4.2.1.33</ecNumber>
    </recommendedName>
    <alternativeName>
        <fullName evidence="1">Alpha-IPM isomerase</fullName>
        <shortName evidence="1">IPMI</shortName>
    </alternativeName>
    <alternativeName>
        <fullName evidence="1">Isopropylmalate isomerase</fullName>
    </alternativeName>
</protein>
<organism>
    <name type="scientific">Azoarcus sp. (strain BH72)</name>
    <dbReference type="NCBI Taxonomy" id="418699"/>
    <lineage>
        <taxon>Bacteria</taxon>
        <taxon>Pseudomonadati</taxon>
        <taxon>Pseudomonadota</taxon>
        <taxon>Betaproteobacteria</taxon>
        <taxon>Rhodocyclales</taxon>
        <taxon>Zoogloeaceae</taxon>
        <taxon>Azoarcus</taxon>
    </lineage>
</organism>
<evidence type="ECO:0000255" key="1">
    <source>
        <dbReference type="HAMAP-Rule" id="MF_01026"/>
    </source>
</evidence>
<dbReference type="EC" id="4.2.1.33" evidence="1"/>
<dbReference type="EMBL" id="AM406670">
    <property type="protein sequence ID" value="CAL93656.1"/>
    <property type="molecule type" value="Genomic_DNA"/>
</dbReference>
<dbReference type="RefSeq" id="WP_011764773.1">
    <property type="nucleotide sequence ID" value="NC_008702.1"/>
</dbReference>
<dbReference type="SMR" id="A1K4A1"/>
<dbReference type="STRING" id="62928.azo1039"/>
<dbReference type="KEGG" id="azo:azo1039"/>
<dbReference type="eggNOG" id="COG0065">
    <property type="taxonomic scope" value="Bacteria"/>
</dbReference>
<dbReference type="HOGENOM" id="CLU_006714_3_4_4"/>
<dbReference type="UniPathway" id="UPA00048">
    <property type="reaction ID" value="UER00071"/>
</dbReference>
<dbReference type="Proteomes" id="UP000002588">
    <property type="component" value="Chromosome"/>
</dbReference>
<dbReference type="GO" id="GO:0003861">
    <property type="term" value="F:3-isopropylmalate dehydratase activity"/>
    <property type="evidence" value="ECO:0007669"/>
    <property type="project" value="UniProtKB-UniRule"/>
</dbReference>
<dbReference type="GO" id="GO:0051539">
    <property type="term" value="F:4 iron, 4 sulfur cluster binding"/>
    <property type="evidence" value="ECO:0007669"/>
    <property type="project" value="UniProtKB-KW"/>
</dbReference>
<dbReference type="GO" id="GO:0046872">
    <property type="term" value="F:metal ion binding"/>
    <property type="evidence" value="ECO:0007669"/>
    <property type="project" value="UniProtKB-KW"/>
</dbReference>
<dbReference type="GO" id="GO:0009098">
    <property type="term" value="P:L-leucine biosynthetic process"/>
    <property type="evidence" value="ECO:0007669"/>
    <property type="project" value="UniProtKB-UniRule"/>
</dbReference>
<dbReference type="CDD" id="cd01583">
    <property type="entry name" value="IPMI"/>
    <property type="match status" value="1"/>
</dbReference>
<dbReference type="FunFam" id="3.30.499.10:FF:000007">
    <property type="entry name" value="3-isopropylmalate dehydratase large subunit"/>
    <property type="match status" value="1"/>
</dbReference>
<dbReference type="Gene3D" id="3.30.499.10">
    <property type="entry name" value="Aconitase, domain 3"/>
    <property type="match status" value="2"/>
</dbReference>
<dbReference type="HAMAP" id="MF_01026">
    <property type="entry name" value="LeuC_type1"/>
    <property type="match status" value="1"/>
</dbReference>
<dbReference type="InterPro" id="IPR004430">
    <property type="entry name" value="3-IsopropMal_deHydase_lsu"/>
</dbReference>
<dbReference type="InterPro" id="IPR015931">
    <property type="entry name" value="Acnase/IPM_dHydase_lsu_aba_1/3"/>
</dbReference>
<dbReference type="InterPro" id="IPR001030">
    <property type="entry name" value="Acoase/IPM_deHydtase_lsu_aba"/>
</dbReference>
<dbReference type="InterPro" id="IPR018136">
    <property type="entry name" value="Aconitase_4Fe-4S_BS"/>
</dbReference>
<dbReference type="InterPro" id="IPR036008">
    <property type="entry name" value="Aconitase_4Fe-4S_dom"/>
</dbReference>
<dbReference type="InterPro" id="IPR050067">
    <property type="entry name" value="IPM_dehydratase_rel_enz"/>
</dbReference>
<dbReference type="InterPro" id="IPR033941">
    <property type="entry name" value="IPMI_cat"/>
</dbReference>
<dbReference type="NCBIfam" id="TIGR00170">
    <property type="entry name" value="leuC"/>
    <property type="match status" value="1"/>
</dbReference>
<dbReference type="NCBIfam" id="NF004016">
    <property type="entry name" value="PRK05478.1"/>
    <property type="match status" value="1"/>
</dbReference>
<dbReference type="NCBIfam" id="NF009116">
    <property type="entry name" value="PRK12466.1"/>
    <property type="match status" value="1"/>
</dbReference>
<dbReference type="PANTHER" id="PTHR43822:SF9">
    <property type="entry name" value="3-ISOPROPYLMALATE DEHYDRATASE"/>
    <property type="match status" value="1"/>
</dbReference>
<dbReference type="PANTHER" id="PTHR43822">
    <property type="entry name" value="HOMOACONITASE, MITOCHONDRIAL-RELATED"/>
    <property type="match status" value="1"/>
</dbReference>
<dbReference type="Pfam" id="PF00330">
    <property type="entry name" value="Aconitase"/>
    <property type="match status" value="1"/>
</dbReference>
<dbReference type="PRINTS" id="PR00415">
    <property type="entry name" value="ACONITASE"/>
</dbReference>
<dbReference type="SUPFAM" id="SSF53732">
    <property type="entry name" value="Aconitase iron-sulfur domain"/>
    <property type="match status" value="1"/>
</dbReference>
<dbReference type="PROSITE" id="PS00450">
    <property type="entry name" value="ACONITASE_1"/>
    <property type="match status" value="1"/>
</dbReference>
<dbReference type="PROSITE" id="PS01244">
    <property type="entry name" value="ACONITASE_2"/>
    <property type="match status" value="1"/>
</dbReference>
<gene>
    <name evidence="1" type="primary">leuC</name>
    <name type="ordered locus">azo1039</name>
</gene>
<feature type="chain" id="PRO_1000063526" description="3-isopropylmalate dehydratase large subunit">
    <location>
        <begin position="1"/>
        <end position="469"/>
    </location>
</feature>
<feature type="binding site" evidence="1">
    <location>
        <position position="349"/>
    </location>
    <ligand>
        <name>[4Fe-4S] cluster</name>
        <dbReference type="ChEBI" id="CHEBI:49883"/>
    </ligand>
</feature>
<feature type="binding site" evidence="1">
    <location>
        <position position="410"/>
    </location>
    <ligand>
        <name>[4Fe-4S] cluster</name>
        <dbReference type="ChEBI" id="CHEBI:49883"/>
    </ligand>
</feature>
<feature type="binding site" evidence="1">
    <location>
        <position position="413"/>
    </location>
    <ligand>
        <name>[4Fe-4S] cluster</name>
        <dbReference type="ChEBI" id="CHEBI:49883"/>
    </ligand>
</feature>
<name>LEUC_AZOSB</name>
<accession>A1K4A1</accession>
<sequence length="469" mass="50254">MEAQTLYEKLWSSHVVHQEADGTALIYIDRHLVHEVTSPQAFEGLKLAGRKPWRISSIVATADHNIPTDHWEMGIQDPVSRQQVETLDANIREVGSLAYFPFKDQRQGIIHVIGPENGTTLPGMTVVCGDSHTSTHGAFACLAHGIGTSEVEHVMATQCLLQKKSKTMLIKVEGTLGRGVTAKDVVLAIIGRIGTAGGTGYAIEFGGSAIRSLSMEGRMTVCNMAIEAGARAGLVAVDETTIDYLKDKPFAPKGPQWDAAVAYWRTLKSDDGATFDTVVELDATSILPQVTWGTSPEMVTTVDGRVPDPAAIADPVKREGVERALKYMGLAPNTPISEIAVDQVFIGSCTNSRIEDLREAAAVVKGRSKAASVRRVLVVPGSGLVKHQAEAEGLDKVFIEAGFEWREPGCSMCLAMNADRLEPGERCASTSNRNFEGRQGAGGRTHLVSPAMAAAAAVTGHFTDVRTLN</sequence>
<proteinExistence type="inferred from homology"/>
<comment type="function">
    <text evidence="1">Catalyzes the isomerization between 2-isopropylmalate and 3-isopropylmalate, via the formation of 2-isopropylmaleate.</text>
</comment>
<comment type="catalytic activity">
    <reaction evidence="1">
        <text>(2R,3S)-3-isopropylmalate = (2S)-2-isopropylmalate</text>
        <dbReference type="Rhea" id="RHEA:32287"/>
        <dbReference type="ChEBI" id="CHEBI:1178"/>
        <dbReference type="ChEBI" id="CHEBI:35121"/>
        <dbReference type="EC" id="4.2.1.33"/>
    </reaction>
</comment>
<comment type="cofactor">
    <cofactor evidence="1">
        <name>[4Fe-4S] cluster</name>
        <dbReference type="ChEBI" id="CHEBI:49883"/>
    </cofactor>
    <text evidence="1">Binds 1 [4Fe-4S] cluster per subunit.</text>
</comment>
<comment type="pathway">
    <text evidence="1">Amino-acid biosynthesis; L-leucine biosynthesis; L-leucine from 3-methyl-2-oxobutanoate: step 2/4.</text>
</comment>
<comment type="subunit">
    <text evidence="1">Heterodimer of LeuC and LeuD.</text>
</comment>
<comment type="similarity">
    <text evidence="1">Belongs to the aconitase/IPM isomerase family. LeuC type 1 subfamily.</text>
</comment>
<reference key="1">
    <citation type="journal article" date="2006" name="Nat. Biotechnol.">
        <title>Complete genome of the mutualistic, N2-fixing grass endophyte Azoarcus sp. strain BH72.</title>
        <authorList>
            <person name="Krause A."/>
            <person name="Ramakumar A."/>
            <person name="Bartels D."/>
            <person name="Battistoni F."/>
            <person name="Bekel T."/>
            <person name="Boch J."/>
            <person name="Boehm M."/>
            <person name="Friedrich F."/>
            <person name="Hurek T."/>
            <person name="Krause L."/>
            <person name="Linke B."/>
            <person name="McHardy A.C."/>
            <person name="Sarkar A."/>
            <person name="Schneiker S."/>
            <person name="Syed A.A."/>
            <person name="Thauer R."/>
            <person name="Vorhoelter F.-J."/>
            <person name="Weidner S."/>
            <person name="Puehler A."/>
            <person name="Reinhold-Hurek B."/>
            <person name="Kaiser O."/>
            <person name="Goesmann A."/>
        </authorList>
    </citation>
    <scope>NUCLEOTIDE SEQUENCE [LARGE SCALE GENOMIC DNA]</scope>
    <source>
        <strain>BH72</strain>
    </source>
</reference>
<keyword id="KW-0004">4Fe-4S</keyword>
<keyword id="KW-0028">Amino-acid biosynthesis</keyword>
<keyword id="KW-0100">Branched-chain amino acid biosynthesis</keyword>
<keyword id="KW-0408">Iron</keyword>
<keyword id="KW-0411">Iron-sulfur</keyword>
<keyword id="KW-0432">Leucine biosynthesis</keyword>
<keyword id="KW-0456">Lyase</keyword>
<keyword id="KW-0479">Metal-binding</keyword>
<keyword id="KW-1185">Reference proteome</keyword>